<organism>
    <name type="scientific">Streptococcus pyogenes serotype M3 (strain SSI-1)</name>
    <dbReference type="NCBI Taxonomy" id="193567"/>
    <lineage>
        <taxon>Bacteria</taxon>
        <taxon>Bacillati</taxon>
        <taxon>Bacillota</taxon>
        <taxon>Bacilli</taxon>
        <taxon>Lactobacillales</taxon>
        <taxon>Streptococcaceae</taxon>
        <taxon>Streptococcus</taxon>
    </lineage>
</organism>
<comment type="similarity">
    <text evidence="1">Belongs to the universal ribosomal protein uL29 family.</text>
</comment>
<protein>
    <recommendedName>
        <fullName evidence="1">Large ribosomal subunit protein uL29</fullName>
    </recommendedName>
    <alternativeName>
        <fullName evidence="2">50S ribosomal protein L29</fullName>
    </alternativeName>
</protein>
<sequence length="68" mass="7962">MKLQEIKDFVKELRGLSQEELAKKENELKKELFDLRFQAAAGQLEKTARLDEVKKQIARVKTVQSEMK</sequence>
<feature type="chain" id="PRO_0000411506" description="Large ribosomal subunit protein uL29">
    <location>
        <begin position="1"/>
        <end position="68"/>
    </location>
</feature>
<gene>
    <name evidence="1" type="primary">rpmC</name>
    <name type="ordered locus">SPs0050</name>
</gene>
<keyword id="KW-0687">Ribonucleoprotein</keyword>
<keyword id="KW-0689">Ribosomal protein</keyword>
<name>RL29_STRPQ</name>
<accession>P0DE33</accession>
<accession>P66177</accession>
<accession>Q9A1W6</accession>
<proteinExistence type="inferred from homology"/>
<evidence type="ECO:0000255" key="1">
    <source>
        <dbReference type="HAMAP-Rule" id="MF_00374"/>
    </source>
</evidence>
<evidence type="ECO:0000305" key="2"/>
<dbReference type="EMBL" id="BA000034">
    <property type="protein sequence ID" value="BAC63145.1"/>
    <property type="molecule type" value="Genomic_DNA"/>
</dbReference>
<dbReference type="RefSeq" id="WP_000775731.1">
    <property type="nucleotide sequence ID" value="NC_004606.1"/>
</dbReference>
<dbReference type="SMR" id="P0DE33"/>
<dbReference type="GeneID" id="69900034"/>
<dbReference type="KEGG" id="sps:SPs0050"/>
<dbReference type="HOGENOM" id="CLU_158491_5_2_9"/>
<dbReference type="GO" id="GO:0022625">
    <property type="term" value="C:cytosolic large ribosomal subunit"/>
    <property type="evidence" value="ECO:0007669"/>
    <property type="project" value="TreeGrafter"/>
</dbReference>
<dbReference type="GO" id="GO:0003735">
    <property type="term" value="F:structural constituent of ribosome"/>
    <property type="evidence" value="ECO:0007669"/>
    <property type="project" value="InterPro"/>
</dbReference>
<dbReference type="GO" id="GO:0006412">
    <property type="term" value="P:translation"/>
    <property type="evidence" value="ECO:0007669"/>
    <property type="project" value="UniProtKB-UniRule"/>
</dbReference>
<dbReference type="CDD" id="cd00427">
    <property type="entry name" value="Ribosomal_L29_HIP"/>
    <property type="match status" value="1"/>
</dbReference>
<dbReference type="FunFam" id="1.10.287.310:FF:000001">
    <property type="entry name" value="50S ribosomal protein L29"/>
    <property type="match status" value="1"/>
</dbReference>
<dbReference type="Gene3D" id="1.10.287.310">
    <property type="match status" value="1"/>
</dbReference>
<dbReference type="HAMAP" id="MF_00374">
    <property type="entry name" value="Ribosomal_uL29"/>
    <property type="match status" value="1"/>
</dbReference>
<dbReference type="InterPro" id="IPR050063">
    <property type="entry name" value="Ribosomal_protein_uL29"/>
</dbReference>
<dbReference type="InterPro" id="IPR001854">
    <property type="entry name" value="Ribosomal_uL29"/>
</dbReference>
<dbReference type="InterPro" id="IPR018254">
    <property type="entry name" value="Ribosomal_uL29_CS"/>
</dbReference>
<dbReference type="InterPro" id="IPR036049">
    <property type="entry name" value="Ribosomal_uL29_sf"/>
</dbReference>
<dbReference type="NCBIfam" id="TIGR00012">
    <property type="entry name" value="L29"/>
    <property type="match status" value="1"/>
</dbReference>
<dbReference type="PANTHER" id="PTHR10916">
    <property type="entry name" value="60S RIBOSOMAL PROTEIN L35/50S RIBOSOMAL PROTEIN L29"/>
    <property type="match status" value="1"/>
</dbReference>
<dbReference type="PANTHER" id="PTHR10916:SF0">
    <property type="entry name" value="LARGE RIBOSOMAL SUBUNIT PROTEIN UL29C"/>
    <property type="match status" value="1"/>
</dbReference>
<dbReference type="Pfam" id="PF00831">
    <property type="entry name" value="Ribosomal_L29"/>
    <property type="match status" value="1"/>
</dbReference>
<dbReference type="SUPFAM" id="SSF46561">
    <property type="entry name" value="Ribosomal protein L29 (L29p)"/>
    <property type="match status" value="1"/>
</dbReference>
<dbReference type="PROSITE" id="PS00579">
    <property type="entry name" value="RIBOSOMAL_L29"/>
    <property type="match status" value="1"/>
</dbReference>
<reference key="1">
    <citation type="journal article" date="2003" name="Genome Res.">
        <title>Genome sequence of an M3 strain of Streptococcus pyogenes reveals a large-scale genomic rearrangement in invasive strains and new insights into phage evolution.</title>
        <authorList>
            <person name="Nakagawa I."/>
            <person name="Kurokawa K."/>
            <person name="Yamashita A."/>
            <person name="Nakata M."/>
            <person name="Tomiyasu Y."/>
            <person name="Okahashi N."/>
            <person name="Kawabata S."/>
            <person name="Yamazaki K."/>
            <person name="Shiba T."/>
            <person name="Yasunaga T."/>
            <person name="Hayashi H."/>
            <person name="Hattori M."/>
            <person name="Hamada S."/>
        </authorList>
    </citation>
    <scope>NUCLEOTIDE SEQUENCE [LARGE SCALE GENOMIC DNA]</scope>
    <source>
        <strain>SSI-1</strain>
    </source>
</reference>